<evidence type="ECO:0000250" key="1">
    <source>
        <dbReference type="UniProtKB" id="Q99J09"/>
    </source>
</evidence>
<evidence type="ECO:0000250" key="2">
    <source>
        <dbReference type="UniProtKB" id="Q9BQA1"/>
    </source>
</evidence>
<evidence type="ECO:0000269" key="3">
    <source ref="2"/>
</evidence>
<evidence type="ECO:0000305" key="4"/>
<evidence type="ECO:0000312" key="5">
    <source>
        <dbReference type="RGD" id="1310479"/>
    </source>
</evidence>
<keyword id="KW-0963">Cytoplasm</keyword>
<keyword id="KW-0903">Direct protein sequencing</keyword>
<keyword id="KW-0539">Nucleus</keyword>
<keyword id="KW-0597">Phosphoprotein</keyword>
<keyword id="KW-1185">Reference proteome</keyword>
<keyword id="KW-0677">Repeat</keyword>
<keyword id="KW-0833">Ubl conjugation pathway</keyword>
<keyword id="KW-0853">WD repeat</keyword>
<name>MEP50_RAT</name>
<comment type="function">
    <text evidence="1 2">Non-catalytic component of the methylosome complex, composed of PRMT5, WDR77 and CLNS1A, which modifies specific arginines to dimethylarginines in several spliceosomal Sm proteins and histones. This modification targets Sm proteins to the survival of motor neurons (SMN) complex for assembly into small nuclear ribonucleoprotein core particles. Might play a role in transcription regulation. The methylosome complex also methylates the Piwi proteins (PIWIL1, PIWIL2 and PIWIL4), methylation of Piwi proteins being required for the interaction with Tudor domain-containing proteins and subsequent localization to the meiotic nuage.</text>
</comment>
<comment type="function">
    <text evidence="1">Substrate-recognition component of the DCX(WDR77) complex, which mediates ubiquitination and degradation of Irgm in intestinal cells.</text>
</comment>
<comment type="subunit">
    <text evidence="1 2">Component of the methylosome complex composed of PRMT5, WDR77 and CLNS1A (By similarity). Found in a complex composed of PRMT5, WDR77 and RIOK1 (By similarity). RIOK1 and CLNS1A bound directly to PRMT5 at the same binding site, in a mutually exclusive manner, which allows the recruitment of distinct methylation substrates, such as nucleolin/NCL and Sm proteins, respectively (By similarity). Found in a complex wit the component of the methylosome, PRMT5, CLNS1A, WDR77, PRMT1 and ERH. Directly interacts with PRMT5, as well as with several Sm proteins, including SNRPB and SNRPD2 and, more weakly, SNRPD3 and SNRPE. Forms a compact hetero-octamer with PRMT5, decorating the outer surface of a PRMT5 tetramer. Interacts with SUZ12 and histone H2A/H2AC20, but not with histones H2B, H3 nor H4. Interacts with CTDP1 and LSM11. Interacts with APEX1, AR and NKX3-1. Interacts with CHTOP. Interacts with FAM47E. Component of the DCX(WDR77) complex, composed of Cul4b, Ddb1, Wdr77 and Rbx1. Interacts with TSC22D2 (By similarity).</text>
</comment>
<comment type="subcellular location">
    <subcellularLocation>
        <location evidence="2">Nucleus</location>
    </subcellularLocation>
    <subcellularLocation>
        <location evidence="2">Cytoplasm</location>
    </subcellularLocation>
</comment>
<protein>
    <recommendedName>
        <fullName evidence="4">Methylosome protein WDR77</fullName>
    </recommendedName>
    <alternativeName>
        <fullName evidence="5">Methylosome protein 50</fullName>
        <shortName evidence="5">MEP-50</shortName>
    </alternativeName>
    <alternativeName>
        <fullName evidence="5">WD repeat-containing protein 77</fullName>
    </alternativeName>
</protein>
<sequence length="342" mass="37076">MRKESPPPLVPPAAREWNLPPNAPACMERQLEAARYRSDGSLLLGASSLSGRCWAGSLWFFKDPSAAPNEGFCSAGVQTEAGVADLTWVGDKGILVASDSGAVELWELDENETLIVSKFCKYEHDDIVSTVTVLSSGTQAVSGSKDFCIKIWDLAQQMSLNSYRAHAGQVTCVAASPHRETVFLSCSEDSRILLWDTRCPKPASQMGCNASGYLPTSLAWHPQQSEIFVFGDENGSVSLVDTKNASCTLSSAVHSQCVTRLVFSPHSVPFLASLSEDCSLAVLDSSFSEVFRSRAHRDFVRDATWSPLNHSLLTTVGWDHQVIHHVVPLEPLPAPGPDSVVE</sequence>
<gene>
    <name evidence="5" type="primary">Wdr77</name>
    <name evidence="5" type="synonym">Mep50</name>
</gene>
<accession>Q4QR85</accession>
<dbReference type="EMBL" id="BC097367">
    <property type="protein sequence ID" value="AAH97367.1"/>
    <property type="molecule type" value="mRNA"/>
</dbReference>
<dbReference type="RefSeq" id="NP_001008771.2">
    <property type="nucleotide sequence ID" value="NM_001008771.3"/>
</dbReference>
<dbReference type="RefSeq" id="XP_017446815.1">
    <property type="nucleotide sequence ID" value="XM_017591326.1"/>
</dbReference>
<dbReference type="SMR" id="Q4QR85"/>
<dbReference type="BioGRID" id="259746">
    <property type="interactions" value="1"/>
</dbReference>
<dbReference type="FunCoup" id="Q4QR85">
    <property type="interactions" value="2240"/>
</dbReference>
<dbReference type="STRING" id="10116.ENSRNOP00000022571"/>
<dbReference type="iPTMnet" id="Q4QR85"/>
<dbReference type="PhosphoSitePlus" id="Q4QR85"/>
<dbReference type="jPOST" id="Q4QR85"/>
<dbReference type="PaxDb" id="10116-ENSRNOP00000022571"/>
<dbReference type="Ensembl" id="ENSRNOT00000076654.3">
    <property type="protein sequence ID" value="ENSRNOP00000068445.1"/>
    <property type="gene ID" value="ENSRNOG00000016394.9"/>
</dbReference>
<dbReference type="GeneID" id="310769"/>
<dbReference type="KEGG" id="rno:310769"/>
<dbReference type="UCSC" id="RGD:1310479">
    <property type="organism name" value="rat"/>
</dbReference>
<dbReference type="AGR" id="RGD:1310479"/>
<dbReference type="CTD" id="79084"/>
<dbReference type="RGD" id="1310479">
    <property type="gene designation" value="Wdr77"/>
</dbReference>
<dbReference type="eggNOG" id="KOG0284">
    <property type="taxonomic scope" value="Eukaryota"/>
</dbReference>
<dbReference type="GeneTree" id="ENSGT00390000010711"/>
<dbReference type="HOGENOM" id="CLU_051285_0_0_1"/>
<dbReference type="InParanoid" id="Q4QR85"/>
<dbReference type="OMA" id="QMGCNAS"/>
<dbReference type="Reactome" id="R-RNO-191859">
    <property type="pathway name" value="snRNP Assembly"/>
</dbReference>
<dbReference type="Reactome" id="R-RNO-3214858">
    <property type="pathway name" value="RMTs methylate histone arginines"/>
</dbReference>
<dbReference type="PRO" id="PR:Q4QR85"/>
<dbReference type="Proteomes" id="UP000002494">
    <property type="component" value="Chromosome 2"/>
</dbReference>
<dbReference type="Bgee" id="ENSRNOG00000016394">
    <property type="expression patterns" value="Expressed in skeletal muscle tissue and 20 other cell types or tissues"/>
</dbReference>
<dbReference type="ExpressionAtlas" id="Q4QR85">
    <property type="expression patterns" value="baseline"/>
</dbReference>
<dbReference type="GO" id="GO:0031465">
    <property type="term" value="C:Cul4B-RING E3 ubiquitin ligase complex"/>
    <property type="evidence" value="ECO:0000266"/>
    <property type="project" value="RGD"/>
</dbReference>
<dbReference type="GO" id="GO:0005737">
    <property type="term" value="C:cytoplasm"/>
    <property type="evidence" value="ECO:0000250"/>
    <property type="project" value="UniProtKB"/>
</dbReference>
<dbReference type="GO" id="GO:0005829">
    <property type="term" value="C:cytosol"/>
    <property type="evidence" value="ECO:0000250"/>
    <property type="project" value="UniProtKB"/>
</dbReference>
<dbReference type="GO" id="GO:0005794">
    <property type="term" value="C:Golgi apparatus"/>
    <property type="evidence" value="ECO:0007669"/>
    <property type="project" value="Ensembl"/>
</dbReference>
<dbReference type="GO" id="GO:0034709">
    <property type="term" value="C:methylosome"/>
    <property type="evidence" value="ECO:0000250"/>
    <property type="project" value="UniProtKB"/>
</dbReference>
<dbReference type="GO" id="GO:0005654">
    <property type="term" value="C:nucleoplasm"/>
    <property type="evidence" value="ECO:0007669"/>
    <property type="project" value="Ensembl"/>
</dbReference>
<dbReference type="GO" id="GO:0005634">
    <property type="term" value="C:nucleus"/>
    <property type="evidence" value="ECO:0000250"/>
    <property type="project" value="UniProtKB"/>
</dbReference>
<dbReference type="GO" id="GO:0008327">
    <property type="term" value="F:methyl-CpG binding"/>
    <property type="evidence" value="ECO:0000250"/>
    <property type="project" value="UniProtKB"/>
</dbReference>
<dbReference type="GO" id="GO:0003713">
    <property type="term" value="F:transcription coactivator activity"/>
    <property type="evidence" value="ECO:0000266"/>
    <property type="project" value="RGD"/>
</dbReference>
<dbReference type="GO" id="GO:1990756">
    <property type="term" value="F:ubiquitin-like ligase-substrate adaptor activity"/>
    <property type="evidence" value="ECO:0000266"/>
    <property type="project" value="RGD"/>
</dbReference>
<dbReference type="GO" id="GO:0060767">
    <property type="term" value="P:epithelial cell proliferation involved in prostate gland development"/>
    <property type="evidence" value="ECO:0000266"/>
    <property type="project" value="RGD"/>
</dbReference>
<dbReference type="GO" id="GO:0008285">
    <property type="term" value="P:negative regulation of cell population proliferation"/>
    <property type="evidence" value="ECO:0000266"/>
    <property type="project" value="RGD"/>
</dbReference>
<dbReference type="GO" id="GO:0060770">
    <property type="term" value="P:negative regulation of epithelial cell proliferation involved in prostate gland development"/>
    <property type="evidence" value="ECO:0000266"/>
    <property type="project" value="RGD"/>
</dbReference>
<dbReference type="GO" id="GO:0007309">
    <property type="term" value="P:oocyte axis specification"/>
    <property type="evidence" value="ECO:0000318"/>
    <property type="project" value="GO_Central"/>
</dbReference>
<dbReference type="GO" id="GO:0008284">
    <property type="term" value="P:positive regulation of cell population proliferation"/>
    <property type="evidence" value="ECO:0000266"/>
    <property type="project" value="RGD"/>
</dbReference>
<dbReference type="GO" id="GO:0000209">
    <property type="term" value="P:protein polyubiquitination"/>
    <property type="evidence" value="ECO:0000266"/>
    <property type="project" value="RGD"/>
</dbReference>
<dbReference type="GO" id="GO:0006357">
    <property type="term" value="P:regulation of transcription by RNA polymerase II"/>
    <property type="evidence" value="ECO:0000266"/>
    <property type="project" value="RGD"/>
</dbReference>
<dbReference type="GO" id="GO:0060528">
    <property type="term" value="P:secretory columnal luminar epithelial cell differentiation involved in prostate glandular acinus development"/>
    <property type="evidence" value="ECO:0000266"/>
    <property type="project" value="RGD"/>
</dbReference>
<dbReference type="GO" id="GO:0006511">
    <property type="term" value="P:ubiquitin-dependent protein catabolic process"/>
    <property type="evidence" value="ECO:0000266"/>
    <property type="project" value="RGD"/>
</dbReference>
<dbReference type="FunFam" id="2.130.10.10:FF:000322">
    <property type="entry name" value="Methylosome protein 50"/>
    <property type="match status" value="1"/>
</dbReference>
<dbReference type="Gene3D" id="2.130.10.10">
    <property type="entry name" value="YVTN repeat-like/Quinoprotein amine dehydrogenase"/>
    <property type="match status" value="1"/>
</dbReference>
<dbReference type="InterPro" id="IPR052139">
    <property type="entry name" value="Methylosome_Comp_WDR77"/>
</dbReference>
<dbReference type="InterPro" id="IPR015943">
    <property type="entry name" value="WD40/YVTN_repeat-like_dom_sf"/>
</dbReference>
<dbReference type="InterPro" id="IPR019775">
    <property type="entry name" value="WD40_repeat_CS"/>
</dbReference>
<dbReference type="InterPro" id="IPR036322">
    <property type="entry name" value="WD40_repeat_dom_sf"/>
</dbReference>
<dbReference type="InterPro" id="IPR001680">
    <property type="entry name" value="WD40_rpt"/>
</dbReference>
<dbReference type="PANTHER" id="PTHR46853">
    <property type="entry name" value="METHYLOSOME PROTEIN 50"/>
    <property type="match status" value="1"/>
</dbReference>
<dbReference type="PANTHER" id="PTHR46853:SF3">
    <property type="entry name" value="METHYLOSOME PROTEIN WDR77"/>
    <property type="match status" value="1"/>
</dbReference>
<dbReference type="Pfam" id="PF00400">
    <property type="entry name" value="WD40"/>
    <property type="match status" value="2"/>
</dbReference>
<dbReference type="SMART" id="SM00320">
    <property type="entry name" value="WD40"/>
    <property type="match status" value="6"/>
</dbReference>
<dbReference type="SUPFAM" id="SSF50978">
    <property type="entry name" value="WD40 repeat-like"/>
    <property type="match status" value="1"/>
</dbReference>
<dbReference type="PROSITE" id="PS00678">
    <property type="entry name" value="WD_REPEATS_1"/>
    <property type="match status" value="1"/>
</dbReference>
<dbReference type="PROSITE" id="PS50082">
    <property type="entry name" value="WD_REPEATS_2"/>
    <property type="match status" value="2"/>
</dbReference>
<dbReference type="PROSITE" id="PS50294">
    <property type="entry name" value="WD_REPEATS_REGION"/>
    <property type="match status" value="1"/>
</dbReference>
<proteinExistence type="evidence at protein level"/>
<organism>
    <name type="scientific">Rattus norvegicus</name>
    <name type="common">Rat</name>
    <dbReference type="NCBI Taxonomy" id="10116"/>
    <lineage>
        <taxon>Eukaryota</taxon>
        <taxon>Metazoa</taxon>
        <taxon>Chordata</taxon>
        <taxon>Craniata</taxon>
        <taxon>Vertebrata</taxon>
        <taxon>Euteleostomi</taxon>
        <taxon>Mammalia</taxon>
        <taxon>Eutheria</taxon>
        <taxon>Euarchontoglires</taxon>
        <taxon>Glires</taxon>
        <taxon>Rodentia</taxon>
        <taxon>Myomorpha</taxon>
        <taxon>Muroidea</taxon>
        <taxon>Muridae</taxon>
        <taxon>Murinae</taxon>
        <taxon>Rattus</taxon>
    </lineage>
</organism>
<feature type="chain" id="PRO_0000331609" description="Methylosome protein WDR77">
    <location>
        <begin position="1"/>
        <end position="342"/>
    </location>
</feature>
<feature type="repeat" description="WD 1">
    <location>
        <begin position="22"/>
        <end position="75"/>
    </location>
</feature>
<feature type="repeat" description="WD 2">
    <location>
        <begin position="78"/>
        <end position="116"/>
    </location>
</feature>
<feature type="repeat" description="WD 3">
    <location>
        <begin position="123"/>
        <end position="162"/>
    </location>
</feature>
<feature type="repeat" description="WD 4">
    <location>
        <begin position="165"/>
        <end position="205"/>
    </location>
</feature>
<feature type="repeat" description="WD 5">
    <location>
        <begin position="209"/>
        <end position="250"/>
    </location>
</feature>
<feature type="repeat" description="WD 6">
    <location>
        <begin position="253"/>
        <end position="293"/>
    </location>
</feature>
<feature type="repeat" description="WD 7">
    <location>
        <begin position="295"/>
        <end position="330"/>
    </location>
</feature>
<feature type="modified residue" description="Phosphoserine" evidence="3">
    <location>
        <position position="5"/>
    </location>
</feature>
<reference key="1">
    <citation type="journal article" date="2004" name="Genome Res.">
        <title>The status, quality, and expansion of the NIH full-length cDNA project: the Mammalian Gene Collection (MGC).</title>
        <authorList>
            <consortium name="The MGC Project Team"/>
        </authorList>
    </citation>
    <scope>NUCLEOTIDE SEQUENCE [LARGE SCALE MRNA]</scope>
    <source>
        <tissue>Placenta</tissue>
    </source>
</reference>
<reference key="2">
    <citation type="submission" date="2009-06" db="UniProtKB">
        <authorList>
            <person name="Bienvenut W.V."/>
            <person name="von Kriegsheim A."/>
            <person name="Kolch W."/>
        </authorList>
    </citation>
    <scope>PROTEIN SEQUENCE OF 3-15; 180-198 AND 244-260</scope>
    <scope>PHOSPHORYLATION AT SER-5</scope>
    <scope>IDENTIFICATION BY MASS SPECTROMETRY</scope>
    <source>
        <tissue>Fibroblast</tissue>
    </source>
</reference>